<reference key="1">
    <citation type="journal article" date="2010" name="Genome Biol. Evol.">
        <title>Continuing evolution of Burkholderia mallei through genome reduction and large-scale rearrangements.</title>
        <authorList>
            <person name="Losada L."/>
            <person name="Ronning C.M."/>
            <person name="DeShazer D."/>
            <person name="Woods D."/>
            <person name="Fedorova N."/>
            <person name="Kim H.S."/>
            <person name="Shabalina S.A."/>
            <person name="Pearson T.R."/>
            <person name="Brinkac L."/>
            <person name="Tan P."/>
            <person name="Nandi T."/>
            <person name="Crabtree J."/>
            <person name="Badger J."/>
            <person name="Beckstrom-Sternberg S."/>
            <person name="Saqib M."/>
            <person name="Schutzer S.E."/>
            <person name="Keim P."/>
            <person name="Nierman W.C."/>
        </authorList>
    </citation>
    <scope>NUCLEOTIDE SEQUENCE [LARGE SCALE GENOMIC DNA]</scope>
    <source>
        <strain>NCTC 10247</strain>
    </source>
</reference>
<comment type="function">
    <text evidence="1">Allows the formation of correctly charged Asn-tRNA(Asn) or Gln-tRNA(Gln) through the transamidation of misacylated Asp-tRNA(Asn) or Glu-tRNA(Gln) in organisms which lack either or both of asparaginyl-tRNA or glutaminyl-tRNA synthetases. The reaction takes place in the presence of glutamine and ATP through an activated phospho-Asp-tRNA(Asn) or phospho-Glu-tRNA(Gln).</text>
</comment>
<comment type="catalytic activity">
    <reaction evidence="1">
        <text>L-glutamyl-tRNA(Gln) + L-glutamine + ATP + H2O = L-glutaminyl-tRNA(Gln) + L-glutamate + ADP + phosphate + H(+)</text>
        <dbReference type="Rhea" id="RHEA:17521"/>
        <dbReference type="Rhea" id="RHEA-COMP:9681"/>
        <dbReference type="Rhea" id="RHEA-COMP:9684"/>
        <dbReference type="ChEBI" id="CHEBI:15377"/>
        <dbReference type="ChEBI" id="CHEBI:15378"/>
        <dbReference type="ChEBI" id="CHEBI:29985"/>
        <dbReference type="ChEBI" id="CHEBI:30616"/>
        <dbReference type="ChEBI" id="CHEBI:43474"/>
        <dbReference type="ChEBI" id="CHEBI:58359"/>
        <dbReference type="ChEBI" id="CHEBI:78520"/>
        <dbReference type="ChEBI" id="CHEBI:78521"/>
        <dbReference type="ChEBI" id="CHEBI:456216"/>
    </reaction>
</comment>
<comment type="catalytic activity">
    <reaction evidence="1">
        <text>L-aspartyl-tRNA(Asn) + L-glutamine + ATP + H2O = L-asparaginyl-tRNA(Asn) + L-glutamate + ADP + phosphate + 2 H(+)</text>
        <dbReference type="Rhea" id="RHEA:14513"/>
        <dbReference type="Rhea" id="RHEA-COMP:9674"/>
        <dbReference type="Rhea" id="RHEA-COMP:9677"/>
        <dbReference type="ChEBI" id="CHEBI:15377"/>
        <dbReference type="ChEBI" id="CHEBI:15378"/>
        <dbReference type="ChEBI" id="CHEBI:29985"/>
        <dbReference type="ChEBI" id="CHEBI:30616"/>
        <dbReference type="ChEBI" id="CHEBI:43474"/>
        <dbReference type="ChEBI" id="CHEBI:58359"/>
        <dbReference type="ChEBI" id="CHEBI:78515"/>
        <dbReference type="ChEBI" id="CHEBI:78516"/>
        <dbReference type="ChEBI" id="CHEBI:456216"/>
    </reaction>
</comment>
<comment type="subunit">
    <text evidence="1">Heterotrimer of A, B and C subunits.</text>
</comment>
<comment type="similarity">
    <text evidence="1">Belongs to the GatC family.</text>
</comment>
<feature type="chain" id="PRO_1000016086" description="Aspartyl/glutamyl-tRNA(Asn/Gln) amidotransferase subunit C">
    <location>
        <begin position="1"/>
        <end position="99"/>
    </location>
</feature>
<organism>
    <name type="scientific">Burkholderia mallei (strain NCTC 10247)</name>
    <dbReference type="NCBI Taxonomy" id="320389"/>
    <lineage>
        <taxon>Bacteria</taxon>
        <taxon>Pseudomonadati</taxon>
        <taxon>Pseudomonadota</taxon>
        <taxon>Betaproteobacteria</taxon>
        <taxon>Burkholderiales</taxon>
        <taxon>Burkholderiaceae</taxon>
        <taxon>Burkholderia</taxon>
        <taxon>pseudomallei group</taxon>
    </lineage>
</organism>
<protein>
    <recommendedName>
        <fullName evidence="1">Aspartyl/glutamyl-tRNA(Asn/Gln) amidotransferase subunit C</fullName>
        <shortName evidence="1">Asp/Glu-ADT subunit C</shortName>
        <ecNumber evidence="1">6.3.5.-</ecNumber>
    </recommendedName>
</protein>
<evidence type="ECO:0000255" key="1">
    <source>
        <dbReference type="HAMAP-Rule" id="MF_00122"/>
    </source>
</evidence>
<accession>A3MNR5</accession>
<gene>
    <name evidence="1" type="primary">gatC</name>
    <name type="ordered locus">BMA10247_2375</name>
</gene>
<name>GATC_BURM7</name>
<dbReference type="EC" id="6.3.5.-" evidence="1"/>
<dbReference type="EMBL" id="CP000548">
    <property type="protein sequence ID" value="ABO04283.1"/>
    <property type="molecule type" value="Genomic_DNA"/>
</dbReference>
<dbReference type="RefSeq" id="WP_004189769.1">
    <property type="nucleotide sequence ID" value="NZ_CP007802.1"/>
</dbReference>
<dbReference type="SMR" id="A3MNR5"/>
<dbReference type="GeneID" id="93058695"/>
<dbReference type="KEGG" id="bmaz:BM44_913"/>
<dbReference type="KEGG" id="bmn:BMA10247_2375"/>
<dbReference type="PATRIC" id="fig|320389.8.peg.1016"/>
<dbReference type="GO" id="GO:0050566">
    <property type="term" value="F:asparaginyl-tRNA synthase (glutamine-hydrolyzing) activity"/>
    <property type="evidence" value="ECO:0007669"/>
    <property type="project" value="RHEA"/>
</dbReference>
<dbReference type="GO" id="GO:0005524">
    <property type="term" value="F:ATP binding"/>
    <property type="evidence" value="ECO:0007669"/>
    <property type="project" value="UniProtKB-KW"/>
</dbReference>
<dbReference type="GO" id="GO:0050567">
    <property type="term" value="F:glutaminyl-tRNA synthase (glutamine-hydrolyzing) activity"/>
    <property type="evidence" value="ECO:0007669"/>
    <property type="project" value="UniProtKB-UniRule"/>
</dbReference>
<dbReference type="GO" id="GO:0070681">
    <property type="term" value="P:glutaminyl-tRNAGln biosynthesis via transamidation"/>
    <property type="evidence" value="ECO:0007669"/>
    <property type="project" value="TreeGrafter"/>
</dbReference>
<dbReference type="GO" id="GO:0006450">
    <property type="term" value="P:regulation of translational fidelity"/>
    <property type="evidence" value="ECO:0007669"/>
    <property type="project" value="InterPro"/>
</dbReference>
<dbReference type="GO" id="GO:0006412">
    <property type="term" value="P:translation"/>
    <property type="evidence" value="ECO:0007669"/>
    <property type="project" value="UniProtKB-UniRule"/>
</dbReference>
<dbReference type="Gene3D" id="1.10.20.60">
    <property type="entry name" value="Glu-tRNAGln amidotransferase C subunit, N-terminal domain"/>
    <property type="match status" value="1"/>
</dbReference>
<dbReference type="HAMAP" id="MF_00122">
    <property type="entry name" value="GatC"/>
    <property type="match status" value="1"/>
</dbReference>
<dbReference type="InterPro" id="IPR036113">
    <property type="entry name" value="Asp/Glu-ADT_sf_sub_c"/>
</dbReference>
<dbReference type="InterPro" id="IPR003837">
    <property type="entry name" value="GatC"/>
</dbReference>
<dbReference type="NCBIfam" id="TIGR00135">
    <property type="entry name" value="gatC"/>
    <property type="match status" value="1"/>
</dbReference>
<dbReference type="PANTHER" id="PTHR15004">
    <property type="entry name" value="GLUTAMYL-TRNA(GLN) AMIDOTRANSFERASE SUBUNIT C, MITOCHONDRIAL"/>
    <property type="match status" value="1"/>
</dbReference>
<dbReference type="PANTHER" id="PTHR15004:SF0">
    <property type="entry name" value="GLUTAMYL-TRNA(GLN) AMIDOTRANSFERASE SUBUNIT C, MITOCHONDRIAL"/>
    <property type="match status" value="1"/>
</dbReference>
<dbReference type="Pfam" id="PF02686">
    <property type="entry name" value="GatC"/>
    <property type="match status" value="1"/>
</dbReference>
<dbReference type="SUPFAM" id="SSF141000">
    <property type="entry name" value="Glu-tRNAGln amidotransferase C subunit"/>
    <property type="match status" value="1"/>
</dbReference>
<proteinExistence type="inferred from homology"/>
<sequence length="99" mass="11030">MALTLTDVTRIAHLARLEMADADAERTLTQLNEFFGLVEQMQAVDTTGIAPLAHPIEQILEVAQRLREDAVTEHVNRDDNQRPAPAVQDGLYLVPKVIE</sequence>
<keyword id="KW-0067">ATP-binding</keyword>
<keyword id="KW-0436">Ligase</keyword>
<keyword id="KW-0547">Nucleotide-binding</keyword>
<keyword id="KW-0648">Protein biosynthesis</keyword>